<reference key="1">
    <citation type="journal article" date="2003" name="Science">
        <title>Role of mobile DNA in the evolution of vancomycin-resistant Enterococcus faecalis.</title>
        <authorList>
            <person name="Paulsen I.T."/>
            <person name="Banerjei L."/>
            <person name="Myers G.S.A."/>
            <person name="Nelson K.E."/>
            <person name="Seshadri R."/>
            <person name="Read T.D."/>
            <person name="Fouts D.E."/>
            <person name="Eisen J.A."/>
            <person name="Gill S.R."/>
            <person name="Heidelberg J.F."/>
            <person name="Tettelin H."/>
            <person name="Dodson R.J."/>
            <person name="Umayam L.A."/>
            <person name="Brinkac L.M."/>
            <person name="Beanan M.J."/>
            <person name="Daugherty S.C."/>
            <person name="DeBoy R.T."/>
            <person name="Durkin S.A."/>
            <person name="Kolonay J.F."/>
            <person name="Madupu R."/>
            <person name="Nelson W.C."/>
            <person name="Vamathevan J.J."/>
            <person name="Tran B."/>
            <person name="Upton J."/>
            <person name="Hansen T."/>
            <person name="Shetty J."/>
            <person name="Khouri H.M."/>
            <person name="Utterback T.R."/>
            <person name="Radune D."/>
            <person name="Ketchum K.A."/>
            <person name="Dougherty B.A."/>
            <person name="Fraser C.M."/>
        </authorList>
    </citation>
    <scope>NUCLEOTIDE SEQUENCE [LARGE SCALE GENOMIC DNA]</scope>
    <source>
        <strain>ATCC 700802 / V583</strain>
    </source>
</reference>
<organism>
    <name type="scientific">Enterococcus faecalis (strain ATCC 700802 / V583)</name>
    <dbReference type="NCBI Taxonomy" id="226185"/>
    <lineage>
        <taxon>Bacteria</taxon>
        <taxon>Bacillati</taxon>
        <taxon>Bacillota</taxon>
        <taxon>Bacilli</taxon>
        <taxon>Lactobacillales</taxon>
        <taxon>Enterococcaceae</taxon>
        <taxon>Enterococcus</taxon>
    </lineage>
</organism>
<name>PYRC_ENTFA</name>
<proteinExistence type="inferred from homology"/>
<gene>
    <name evidence="1" type="primary">pyrC</name>
    <name type="ordered locus">EF_1718</name>
</gene>
<sequence length="427" mass="46058">MKTLIKNGKIIKKENQLIEAALWLENGVIHAIGESFDEADFEQVFDANGQLITPGLVDVHVHFREPGFTYKETIKTGSKAAARGGFTTVCAMPNLNPVPDTAEKLSEVYDLIQKDAVVKVLQYAPITEELRSEVLTNQKALKEAGAFAFTNDGVGVQTAGTMYLAMKEAAALNMALVAHTEDESLLFGGVMHEGEVSKKLGLPGILSATEASQIARDITLAKETGVHYHVCHVSTEESVRVIRDAKKAGIHVTAEVSPHHLILVDEDIPGDEGFWKMNPPLRGLADRQALIDGLLDGTIDCIATDHAPHGLEEKQQSFLNAPFGIVGSETAFQLIYTNFVETGIFTLEQVIDWMAVKPAEIFGLNAGTLTIGAPADIAVFDLATAAPIDAEAFESMAVNTPFTGWTVKGKTLMTFVDGALAWSEEAQ</sequence>
<accession>Q834E0</accession>
<comment type="function">
    <text evidence="1">Catalyzes the reversible cyclization of carbamoyl aspartate to dihydroorotate.</text>
</comment>
<comment type="catalytic activity">
    <reaction evidence="1">
        <text>(S)-dihydroorotate + H2O = N-carbamoyl-L-aspartate + H(+)</text>
        <dbReference type="Rhea" id="RHEA:24296"/>
        <dbReference type="ChEBI" id="CHEBI:15377"/>
        <dbReference type="ChEBI" id="CHEBI:15378"/>
        <dbReference type="ChEBI" id="CHEBI:30864"/>
        <dbReference type="ChEBI" id="CHEBI:32814"/>
        <dbReference type="EC" id="3.5.2.3"/>
    </reaction>
</comment>
<comment type="cofactor">
    <cofactor evidence="1">
        <name>Zn(2+)</name>
        <dbReference type="ChEBI" id="CHEBI:29105"/>
    </cofactor>
    <text evidence="1">Binds 2 Zn(2+) ions per subunit.</text>
</comment>
<comment type="pathway">
    <text evidence="1">Pyrimidine metabolism; UMP biosynthesis via de novo pathway; (S)-dihydroorotate from bicarbonate: step 3/3.</text>
</comment>
<comment type="similarity">
    <text evidence="1">Belongs to the metallo-dependent hydrolases superfamily. DHOase family. Class I DHOase subfamily.</text>
</comment>
<protein>
    <recommendedName>
        <fullName evidence="1">Dihydroorotase</fullName>
        <shortName evidence="1">DHOase</shortName>
        <ecNumber evidence="1">3.5.2.3</ecNumber>
    </recommendedName>
</protein>
<feature type="chain" id="PRO_1000024082" description="Dihydroorotase">
    <location>
        <begin position="1"/>
        <end position="427"/>
    </location>
</feature>
<feature type="active site" evidence="1">
    <location>
        <position position="305"/>
    </location>
</feature>
<feature type="binding site" evidence="1">
    <location>
        <position position="60"/>
    </location>
    <ligand>
        <name>Zn(2+)</name>
        <dbReference type="ChEBI" id="CHEBI:29105"/>
        <label>1</label>
    </ligand>
</feature>
<feature type="binding site" evidence="1">
    <location>
        <begin position="62"/>
        <end position="64"/>
    </location>
    <ligand>
        <name>substrate</name>
    </ligand>
</feature>
<feature type="binding site" evidence="1">
    <location>
        <position position="62"/>
    </location>
    <ligand>
        <name>Zn(2+)</name>
        <dbReference type="ChEBI" id="CHEBI:29105"/>
        <label>1</label>
    </ligand>
</feature>
<feature type="binding site" evidence="1">
    <location>
        <position position="94"/>
    </location>
    <ligand>
        <name>substrate</name>
    </ligand>
</feature>
<feature type="binding site" evidence="1">
    <location>
        <position position="152"/>
    </location>
    <ligand>
        <name>Zn(2+)</name>
        <dbReference type="ChEBI" id="CHEBI:29105"/>
        <label>1</label>
    </ligand>
</feature>
<feature type="binding site" evidence="1">
    <location>
        <position position="152"/>
    </location>
    <ligand>
        <name>Zn(2+)</name>
        <dbReference type="ChEBI" id="CHEBI:29105"/>
        <label>2</label>
    </ligand>
</feature>
<feature type="binding site" evidence="1">
    <location>
        <position position="179"/>
    </location>
    <ligand>
        <name>Zn(2+)</name>
        <dbReference type="ChEBI" id="CHEBI:29105"/>
        <label>2</label>
    </ligand>
</feature>
<feature type="binding site" evidence="1">
    <location>
        <position position="232"/>
    </location>
    <ligand>
        <name>Zn(2+)</name>
        <dbReference type="ChEBI" id="CHEBI:29105"/>
        <label>2</label>
    </ligand>
</feature>
<feature type="binding site" evidence="1">
    <location>
        <position position="278"/>
    </location>
    <ligand>
        <name>substrate</name>
    </ligand>
</feature>
<feature type="binding site" evidence="1">
    <location>
        <position position="305"/>
    </location>
    <ligand>
        <name>Zn(2+)</name>
        <dbReference type="ChEBI" id="CHEBI:29105"/>
        <label>1</label>
    </ligand>
</feature>
<feature type="binding site" evidence="1">
    <location>
        <position position="309"/>
    </location>
    <ligand>
        <name>substrate</name>
    </ligand>
</feature>
<feature type="binding site" evidence="1">
    <location>
        <begin position="323"/>
        <end position="324"/>
    </location>
    <ligand>
        <name>substrate</name>
    </ligand>
</feature>
<evidence type="ECO:0000255" key="1">
    <source>
        <dbReference type="HAMAP-Rule" id="MF_00220"/>
    </source>
</evidence>
<dbReference type="EC" id="3.5.2.3" evidence="1"/>
<dbReference type="EMBL" id="AE016830">
    <property type="protein sequence ID" value="AAO81494.1"/>
    <property type="molecule type" value="Genomic_DNA"/>
</dbReference>
<dbReference type="RefSeq" id="NP_815424.1">
    <property type="nucleotide sequence ID" value="NC_004668.1"/>
</dbReference>
<dbReference type="RefSeq" id="WP_002357412.1">
    <property type="nucleotide sequence ID" value="NZ_KE136528.1"/>
</dbReference>
<dbReference type="SMR" id="Q834E0"/>
<dbReference type="STRING" id="226185.EF_1718"/>
<dbReference type="EnsemblBacteria" id="AAO81494">
    <property type="protein sequence ID" value="AAO81494"/>
    <property type="gene ID" value="EF_1718"/>
</dbReference>
<dbReference type="KEGG" id="efa:EF1718"/>
<dbReference type="PATRIC" id="fig|226185.45.peg.1794"/>
<dbReference type="eggNOG" id="COG0044">
    <property type="taxonomic scope" value="Bacteria"/>
</dbReference>
<dbReference type="HOGENOM" id="CLU_015572_1_0_9"/>
<dbReference type="UniPathway" id="UPA00070">
    <property type="reaction ID" value="UER00117"/>
</dbReference>
<dbReference type="Proteomes" id="UP000001415">
    <property type="component" value="Chromosome"/>
</dbReference>
<dbReference type="GO" id="GO:0005737">
    <property type="term" value="C:cytoplasm"/>
    <property type="evidence" value="ECO:0007669"/>
    <property type="project" value="TreeGrafter"/>
</dbReference>
<dbReference type="GO" id="GO:0004038">
    <property type="term" value="F:allantoinase activity"/>
    <property type="evidence" value="ECO:0007669"/>
    <property type="project" value="TreeGrafter"/>
</dbReference>
<dbReference type="GO" id="GO:0004151">
    <property type="term" value="F:dihydroorotase activity"/>
    <property type="evidence" value="ECO:0007669"/>
    <property type="project" value="UniProtKB-UniRule"/>
</dbReference>
<dbReference type="GO" id="GO:0008270">
    <property type="term" value="F:zinc ion binding"/>
    <property type="evidence" value="ECO:0007669"/>
    <property type="project" value="UniProtKB-UniRule"/>
</dbReference>
<dbReference type="GO" id="GO:0044205">
    <property type="term" value="P:'de novo' UMP biosynthetic process"/>
    <property type="evidence" value="ECO:0007669"/>
    <property type="project" value="UniProtKB-UniRule"/>
</dbReference>
<dbReference type="GO" id="GO:0006145">
    <property type="term" value="P:purine nucleobase catabolic process"/>
    <property type="evidence" value="ECO:0007669"/>
    <property type="project" value="TreeGrafter"/>
</dbReference>
<dbReference type="CDD" id="cd01317">
    <property type="entry name" value="DHOase_IIa"/>
    <property type="match status" value="1"/>
</dbReference>
<dbReference type="Gene3D" id="3.20.20.140">
    <property type="entry name" value="Metal-dependent hydrolases"/>
    <property type="match status" value="1"/>
</dbReference>
<dbReference type="Gene3D" id="2.30.40.10">
    <property type="entry name" value="Urease, subunit C, domain 1"/>
    <property type="match status" value="1"/>
</dbReference>
<dbReference type="HAMAP" id="MF_00220_B">
    <property type="entry name" value="PyrC_classI_B"/>
    <property type="match status" value="1"/>
</dbReference>
<dbReference type="InterPro" id="IPR006680">
    <property type="entry name" value="Amidohydro-rel"/>
</dbReference>
<dbReference type="InterPro" id="IPR004722">
    <property type="entry name" value="DHOase"/>
</dbReference>
<dbReference type="InterPro" id="IPR050138">
    <property type="entry name" value="DHOase/Allantoinase_Hydrolase"/>
</dbReference>
<dbReference type="InterPro" id="IPR002195">
    <property type="entry name" value="Dihydroorotase_CS"/>
</dbReference>
<dbReference type="InterPro" id="IPR011059">
    <property type="entry name" value="Metal-dep_hydrolase_composite"/>
</dbReference>
<dbReference type="InterPro" id="IPR032466">
    <property type="entry name" value="Metal_Hydrolase"/>
</dbReference>
<dbReference type="NCBIfam" id="NF006837">
    <property type="entry name" value="PRK09357.1-2"/>
    <property type="match status" value="1"/>
</dbReference>
<dbReference type="NCBIfam" id="TIGR00857">
    <property type="entry name" value="pyrC_multi"/>
    <property type="match status" value="1"/>
</dbReference>
<dbReference type="PANTHER" id="PTHR43668">
    <property type="entry name" value="ALLANTOINASE"/>
    <property type="match status" value="1"/>
</dbReference>
<dbReference type="PANTHER" id="PTHR43668:SF2">
    <property type="entry name" value="ALLANTOINASE"/>
    <property type="match status" value="1"/>
</dbReference>
<dbReference type="Pfam" id="PF01979">
    <property type="entry name" value="Amidohydro_1"/>
    <property type="match status" value="1"/>
</dbReference>
<dbReference type="SUPFAM" id="SSF51338">
    <property type="entry name" value="Composite domain of metallo-dependent hydrolases"/>
    <property type="match status" value="1"/>
</dbReference>
<dbReference type="SUPFAM" id="SSF51556">
    <property type="entry name" value="Metallo-dependent hydrolases"/>
    <property type="match status" value="1"/>
</dbReference>
<dbReference type="PROSITE" id="PS00482">
    <property type="entry name" value="DIHYDROOROTASE_1"/>
    <property type="match status" value="1"/>
</dbReference>
<dbReference type="PROSITE" id="PS00483">
    <property type="entry name" value="DIHYDROOROTASE_2"/>
    <property type="match status" value="1"/>
</dbReference>
<keyword id="KW-0378">Hydrolase</keyword>
<keyword id="KW-0479">Metal-binding</keyword>
<keyword id="KW-0665">Pyrimidine biosynthesis</keyword>
<keyword id="KW-1185">Reference proteome</keyword>
<keyword id="KW-0862">Zinc</keyword>